<dbReference type="EC" id="3.6.1.-"/>
<dbReference type="EMBL" id="CP000946">
    <property type="protein sequence ID" value="ACA78792.1"/>
    <property type="molecule type" value="Genomic_DNA"/>
</dbReference>
<dbReference type="RefSeq" id="WP_000445029.1">
    <property type="nucleotide sequence ID" value="NC_010468.1"/>
</dbReference>
<dbReference type="SMR" id="B1IZE7"/>
<dbReference type="KEGG" id="ecl:EcolC_3169"/>
<dbReference type="HOGENOM" id="CLU_044146_5_2_6"/>
<dbReference type="GO" id="GO:0000287">
    <property type="term" value="F:magnesium ion binding"/>
    <property type="evidence" value="ECO:0000250"/>
    <property type="project" value="UniProtKB"/>
</dbReference>
<dbReference type="GO" id="GO:0016791">
    <property type="term" value="F:phosphatase activity"/>
    <property type="evidence" value="ECO:0000250"/>
    <property type="project" value="UniProtKB"/>
</dbReference>
<dbReference type="CDD" id="cd07516">
    <property type="entry name" value="HAD_Pase"/>
    <property type="match status" value="1"/>
</dbReference>
<dbReference type="FunFam" id="3.30.1240.10:FF:000002">
    <property type="entry name" value="HMP-PP phosphatase"/>
    <property type="match status" value="1"/>
</dbReference>
<dbReference type="Gene3D" id="3.30.1240.10">
    <property type="match status" value="1"/>
</dbReference>
<dbReference type="Gene3D" id="3.40.50.1000">
    <property type="entry name" value="HAD superfamily/HAD-like"/>
    <property type="match status" value="1"/>
</dbReference>
<dbReference type="InterPro" id="IPR000150">
    <property type="entry name" value="Cof"/>
</dbReference>
<dbReference type="InterPro" id="IPR036412">
    <property type="entry name" value="HAD-like_sf"/>
</dbReference>
<dbReference type="InterPro" id="IPR006379">
    <property type="entry name" value="HAD-SF_hydro_IIB"/>
</dbReference>
<dbReference type="InterPro" id="IPR023214">
    <property type="entry name" value="HAD_sf"/>
</dbReference>
<dbReference type="NCBIfam" id="TIGR00099">
    <property type="entry name" value="Cof-subfamily"/>
    <property type="match status" value="1"/>
</dbReference>
<dbReference type="NCBIfam" id="TIGR01484">
    <property type="entry name" value="HAD-SF-IIB"/>
    <property type="match status" value="1"/>
</dbReference>
<dbReference type="NCBIfam" id="NF011705">
    <property type="entry name" value="PRK15126.1"/>
    <property type="match status" value="1"/>
</dbReference>
<dbReference type="PANTHER" id="PTHR47267">
    <property type="match status" value="1"/>
</dbReference>
<dbReference type="PANTHER" id="PTHR47267:SF2">
    <property type="entry name" value="HMP-PP PHOSPHATASE"/>
    <property type="match status" value="1"/>
</dbReference>
<dbReference type="Pfam" id="PF08282">
    <property type="entry name" value="Hydrolase_3"/>
    <property type="match status" value="1"/>
</dbReference>
<dbReference type="SUPFAM" id="SSF56784">
    <property type="entry name" value="HAD-like"/>
    <property type="match status" value="1"/>
</dbReference>
<dbReference type="PROSITE" id="PS01229">
    <property type="entry name" value="COF_2"/>
    <property type="match status" value="1"/>
</dbReference>
<proteinExistence type="inferred from homology"/>
<feature type="chain" id="PRO_0000342977" description="HMP-PP phosphatase">
    <location>
        <begin position="1"/>
        <end position="255"/>
    </location>
</feature>
<feature type="binding site" evidence="1">
    <location>
        <position position="195"/>
    </location>
    <ligand>
        <name>Mg(2+)</name>
        <dbReference type="ChEBI" id="CHEBI:18420"/>
    </ligand>
</feature>
<accession>B1IZE7</accession>
<reference key="1">
    <citation type="submission" date="2008-02" db="EMBL/GenBank/DDBJ databases">
        <title>Complete sequence of Escherichia coli C str. ATCC 8739.</title>
        <authorList>
            <person name="Copeland A."/>
            <person name="Lucas S."/>
            <person name="Lapidus A."/>
            <person name="Glavina del Rio T."/>
            <person name="Dalin E."/>
            <person name="Tice H."/>
            <person name="Bruce D."/>
            <person name="Goodwin L."/>
            <person name="Pitluck S."/>
            <person name="Kiss H."/>
            <person name="Brettin T."/>
            <person name="Detter J.C."/>
            <person name="Han C."/>
            <person name="Kuske C.R."/>
            <person name="Schmutz J."/>
            <person name="Larimer F."/>
            <person name="Land M."/>
            <person name="Hauser L."/>
            <person name="Kyrpides N."/>
            <person name="Mikhailova N."/>
            <person name="Ingram L."/>
            <person name="Richardson P."/>
        </authorList>
    </citation>
    <scope>NUCLEOTIDE SEQUENCE [LARGE SCALE GENOMIC DNA]</scope>
    <source>
        <strain>ATCC 8739 / DSM 1576 / NBRC 3972 / NCIMB 8545 / WDCM 00012 / Crooks</strain>
    </source>
</reference>
<evidence type="ECO:0000250" key="1"/>
<evidence type="ECO:0000305" key="2"/>
<name>COF_ECOLC</name>
<protein>
    <recommendedName>
        <fullName>HMP-PP phosphatase</fullName>
        <ecNumber>3.6.1.-</ecNumber>
    </recommendedName>
</protein>
<organism>
    <name type="scientific">Escherichia coli (strain ATCC 8739 / DSM 1576 / NBRC 3972 / NCIMB 8545 / WDCM 00012 / Crooks)</name>
    <dbReference type="NCBI Taxonomy" id="481805"/>
    <lineage>
        <taxon>Bacteria</taxon>
        <taxon>Pseudomonadati</taxon>
        <taxon>Pseudomonadota</taxon>
        <taxon>Gammaproteobacteria</taxon>
        <taxon>Enterobacterales</taxon>
        <taxon>Enterobacteriaceae</taxon>
        <taxon>Escherichia</taxon>
    </lineage>
</organism>
<sequence length="255" mass="28463">MESLPKTLSTLARLRERDITLTFATGRHALEMQHILGALSLDAYLITGNGTRVHSLEGELLHRDDLPADVAELVLYQQWDTRASMHIFNDDGWFTGKEIPALLQAFVYSGFRYQIIDVKKMPLGSVTKICFCGDHDDLTRLQIQLYEALGERAHLCFSATDCLEVLPVGCNKGAALTVLTQHLGLSLRDCMAFGDAMNDREMLGSVGSGFIMGNAMPQLRAELPHLPVIGHCRNQAVSHYLTHWLDYPHLPYSPE</sequence>
<gene>
    <name type="primary">cof</name>
    <name type="ordered locus">EcolC_3169</name>
</gene>
<comment type="function">
    <text evidence="1">Catalyzes the hydrolysis of 4-amino-2-methyl-5-hydroxymethylpyrimidine pyrophosphate (HMP-PP) to 4-amino-2-methyl-5-hydroxymethylpyrimidine phosphate (HMP-P).</text>
</comment>
<comment type="cofactor">
    <cofactor evidence="1">
        <name>Mg(2+)</name>
        <dbReference type="ChEBI" id="CHEBI:18420"/>
    </cofactor>
</comment>
<comment type="similarity">
    <text evidence="2">Belongs to the HAD-like hydrolase superfamily. Cof family.</text>
</comment>
<keyword id="KW-0378">Hydrolase</keyword>
<keyword id="KW-0460">Magnesium</keyword>
<keyword id="KW-0479">Metal-binding</keyword>